<proteinExistence type="inferred from homology"/>
<gene>
    <name evidence="1" type="primary">add</name>
    <name type="ordered locus">CA_C3005</name>
</gene>
<reference key="1">
    <citation type="journal article" date="2001" name="J. Bacteriol.">
        <title>Genome sequence and comparative analysis of the solvent-producing bacterium Clostridium acetobutylicum.</title>
        <authorList>
            <person name="Noelling J."/>
            <person name="Breton G."/>
            <person name="Omelchenko M.V."/>
            <person name="Makarova K.S."/>
            <person name="Zeng Q."/>
            <person name="Gibson R."/>
            <person name="Lee H.M."/>
            <person name="Dubois J."/>
            <person name="Qiu D."/>
            <person name="Hitti J."/>
            <person name="Wolf Y.I."/>
            <person name="Tatusov R.L."/>
            <person name="Sabathe F."/>
            <person name="Doucette-Stamm L.A."/>
            <person name="Soucaille P."/>
            <person name="Daly M.J."/>
            <person name="Bennett G.N."/>
            <person name="Koonin E.V."/>
            <person name="Smith D.R."/>
        </authorList>
    </citation>
    <scope>NUCLEOTIDE SEQUENCE [LARGE SCALE GENOMIC DNA]</scope>
    <source>
        <strain>ATCC 824 / DSM 792 / JCM 1419 / IAM 19013 / LMG 5710 / NBRC 13948 / NRRL B-527 / VKM B-1787 / 2291 / W</strain>
    </source>
</reference>
<protein>
    <recommendedName>
        <fullName evidence="1">Adenosine deaminase</fullName>
        <ecNumber evidence="1">3.5.4.4</ecNumber>
    </recommendedName>
    <alternativeName>
        <fullName evidence="1">Adenosine aminohydrolase</fullName>
    </alternativeName>
</protein>
<feature type="chain" id="PRO_0000194365" description="Adenosine deaminase">
    <location>
        <begin position="1"/>
        <end position="334"/>
    </location>
</feature>
<feature type="active site" description="Proton donor" evidence="1">
    <location>
        <position position="203"/>
    </location>
</feature>
<feature type="binding site" evidence="1">
    <location>
        <position position="16"/>
    </location>
    <ligand>
        <name>Zn(2+)</name>
        <dbReference type="ChEBI" id="CHEBI:29105"/>
        <note>catalytic</note>
    </ligand>
</feature>
<feature type="binding site" evidence="1">
    <location>
        <position position="18"/>
    </location>
    <ligand>
        <name>substrate</name>
    </ligand>
</feature>
<feature type="binding site" evidence="1">
    <location>
        <position position="18"/>
    </location>
    <ligand>
        <name>Zn(2+)</name>
        <dbReference type="ChEBI" id="CHEBI:29105"/>
        <note>catalytic</note>
    </ligand>
</feature>
<feature type="binding site" evidence="1">
    <location>
        <position position="20"/>
    </location>
    <ligand>
        <name>substrate</name>
    </ligand>
</feature>
<feature type="binding site" evidence="1">
    <location>
        <position position="173"/>
    </location>
    <ligand>
        <name>substrate</name>
    </ligand>
</feature>
<feature type="binding site" evidence="1">
    <location>
        <position position="200"/>
    </location>
    <ligand>
        <name>Zn(2+)</name>
        <dbReference type="ChEBI" id="CHEBI:29105"/>
        <note>catalytic</note>
    </ligand>
</feature>
<feature type="binding site" evidence="1">
    <location>
        <position position="281"/>
    </location>
    <ligand>
        <name>Zn(2+)</name>
        <dbReference type="ChEBI" id="CHEBI:29105"/>
        <note>catalytic</note>
    </ligand>
</feature>
<feature type="site" description="Important for catalytic activity" evidence="1">
    <location>
        <position position="224"/>
    </location>
</feature>
<dbReference type="EC" id="3.5.4.4" evidence="1"/>
<dbReference type="EMBL" id="AE001437">
    <property type="protein sequence ID" value="AAK80946.1"/>
    <property type="molecule type" value="Genomic_DNA"/>
</dbReference>
<dbReference type="PIR" id="G97269">
    <property type="entry name" value="G97269"/>
</dbReference>
<dbReference type="RefSeq" id="NP_349606.1">
    <property type="nucleotide sequence ID" value="NC_003030.1"/>
</dbReference>
<dbReference type="RefSeq" id="WP_010966287.1">
    <property type="nucleotide sequence ID" value="NC_003030.1"/>
</dbReference>
<dbReference type="SMR" id="Q97EV1"/>
<dbReference type="STRING" id="272562.CA_C3005"/>
<dbReference type="GeneID" id="44999492"/>
<dbReference type="KEGG" id="cac:CA_C3005"/>
<dbReference type="PATRIC" id="fig|272562.8.peg.3189"/>
<dbReference type="eggNOG" id="COG1816">
    <property type="taxonomic scope" value="Bacteria"/>
</dbReference>
<dbReference type="HOGENOM" id="CLU_039228_0_0_9"/>
<dbReference type="OrthoDB" id="9779574at2"/>
<dbReference type="Proteomes" id="UP000000814">
    <property type="component" value="Chromosome"/>
</dbReference>
<dbReference type="GO" id="GO:0005829">
    <property type="term" value="C:cytosol"/>
    <property type="evidence" value="ECO:0007669"/>
    <property type="project" value="TreeGrafter"/>
</dbReference>
<dbReference type="GO" id="GO:0046936">
    <property type="term" value="F:2'-deoxyadenosine deaminase activity"/>
    <property type="evidence" value="ECO:0007669"/>
    <property type="project" value="RHEA"/>
</dbReference>
<dbReference type="GO" id="GO:0004000">
    <property type="term" value="F:adenosine deaminase activity"/>
    <property type="evidence" value="ECO:0007669"/>
    <property type="project" value="UniProtKB-UniRule"/>
</dbReference>
<dbReference type="GO" id="GO:0008270">
    <property type="term" value="F:zinc ion binding"/>
    <property type="evidence" value="ECO:0007669"/>
    <property type="project" value="UniProtKB-UniRule"/>
</dbReference>
<dbReference type="GO" id="GO:0006154">
    <property type="term" value="P:adenosine catabolic process"/>
    <property type="evidence" value="ECO:0007669"/>
    <property type="project" value="TreeGrafter"/>
</dbReference>
<dbReference type="GO" id="GO:0043103">
    <property type="term" value="P:hypoxanthine salvage"/>
    <property type="evidence" value="ECO:0007669"/>
    <property type="project" value="TreeGrafter"/>
</dbReference>
<dbReference type="GO" id="GO:0046103">
    <property type="term" value="P:inosine biosynthetic process"/>
    <property type="evidence" value="ECO:0007669"/>
    <property type="project" value="TreeGrafter"/>
</dbReference>
<dbReference type="GO" id="GO:0009117">
    <property type="term" value="P:nucleotide metabolic process"/>
    <property type="evidence" value="ECO:0007669"/>
    <property type="project" value="UniProtKB-KW"/>
</dbReference>
<dbReference type="GO" id="GO:0009168">
    <property type="term" value="P:purine ribonucleoside monophosphate biosynthetic process"/>
    <property type="evidence" value="ECO:0007669"/>
    <property type="project" value="UniProtKB-UniRule"/>
</dbReference>
<dbReference type="CDD" id="cd01320">
    <property type="entry name" value="ADA"/>
    <property type="match status" value="1"/>
</dbReference>
<dbReference type="Gene3D" id="3.20.20.140">
    <property type="entry name" value="Metal-dependent hydrolases"/>
    <property type="match status" value="1"/>
</dbReference>
<dbReference type="HAMAP" id="MF_00540">
    <property type="entry name" value="A_deaminase"/>
    <property type="match status" value="1"/>
</dbReference>
<dbReference type="InterPro" id="IPR028893">
    <property type="entry name" value="A_deaminase"/>
</dbReference>
<dbReference type="InterPro" id="IPR001365">
    <property type="entry name" value="A_deaminase_dom"/>
</dbReference>
<dbReference type="InterPro" id="IPR006330">
    <property type="entry name" value="Ado/ade_deaminase"/>
</dbReference>
<dbReference type="InterPro" id="IPR032466">
    <property type="entry name" value="Metal_Hydrolase"/>
</dbReference>
<dbReference type="NCBIfam" id="TIGR01430">
    <property type="entry name" value="aden_deam"/>
    <property type="match status" value="1"/>
</dbReference>
<dbReference type="PANTHER" id="PTHR11409">
    <property type="entry name" value="ADENOSINE DEAMINASE"/>
    <property type="match status" value="1"/>
</dbReference>
<dbReference type="PANTHER" id="PTHR11409:SF43">
    <property type="entry name" value="ADENOSINE DEAMINASE"/>
    <property type="match status" value="1"/>
</dbReference>
<dbReference type="Pfam" id="PF00962">
    <property type="entry name" value="A_deaminase"/>
    <property type="match status" value="1"/>
</dbReference>
<dbReference type="SUPFAM" id="SSF51556">
    <property type="entry name" value="Metallo-dependent hydrolases"/>
    <property type="match status" value="1"/>
</dbReference>
<name>ADD_CLOAB</name>
<sequence>MNIKEQIINLPKVELHCHLDGSLRPETVLDLCLKENINIPYENPEDFKSSLKISKNCSSLKEYLEKFYFPIRVMQKKENIYRVTMELLEDSKKDGIEYTEIRFAPFQHTEQDLNENDVVEAALEALQDGESKLGIHSNLILCSLRHDPVERSIDLVNLANSYNEGVCAVDLAGNESDFPPELHKEAFDLAYDNGIKITIHAGETGIAENILKSIKLLHADRIGHGIFAYKSEEILQYVIENQVPLEMCPKSNVDTKAVKNYKNHPFKKYFDLGVKVTLNTDNRTVSNVSLVDEYLNLANIFDFGIEEIKTVIRNGISASFATEEFKVNLLKKLD</sequence>
<keyword id="KW-0378">Hydrolase</keyword>
<keyword id="KW-0479">Metal-binding</keyword>
<keyword id="KW-0546">Nucleotide metabolism</keyword>
<keyword id="KW-1185">Reference proteome</keyword>
<keyword id="KW-0862">Zinc</keyword>
<comment type="function">
    <text evidence="1">Catalyzes the hydrolytic deamination of adenosine and 2-deoxyadenosine.</text>
</comment>
<comment type="catalytic activity">
    <reaction evidence="1">
        <text>adenosine + H2O + H(+) = inosine + NH4(+)</text>
        <dbReference type="Rhea" id="RHEA:24408"/>
        <dbReference type="ChEBI" id="CHEBI:15377"/>
        <dbReference type="ChEBI" id="CHEBI:15378"/>
        <dbReference type="ChEBI" id="CHEBI:16335"/>
        <dbReference type="ChEBI" id="CHEBI:17596"/>
        <dbReference type="ChEBI" id="CHEBI:28938"/>
        <dbReference type="EC" id="3.5.4.4"/>
    </reaction>
    <physiologicalReaction direction="left-to-right" evidence="1">
        <dbReference type="Rhea" id="RHEA:24409"/>
    </physiologicalReaction>
</comment>
<comment type="catalytic activity">
    <reaction evidence="1">
        <text>2'-deoxyadenosine + H2O + H(+) = 2'-deoxyinosine + NH4(+)</text>
        <dbReference type="Rhea" id="RHEA:28190"/>
        <dbReference type="ChEBI" id="CHEBI:15377"/>
        <dbReference type="ChEBI" id="CHEBI:15378"/>
        <dbReference type="ChEBI" id="CHEBI:17256"/>
        <dbReference type="ChEBI" id="CHEBI:28938"/>
        <dbReference type="ChEBI" id="CHEBI:28997"/>
        <dbReference type="EC" id="3.5.4.4"/>
    </reaction>
    <physiologicalReaction direction="left-to-right" evidence="1">
        <dbReference type="Rhea" id="RHEA:28191"/>
    </physiologicalReaction>
</comment>
<comment type="cofactor">
    <cofactor evidence="1">
        <name>Zn(2+)</name>
        <dbReference type="ChEBI" id="CHEBI:29105"/>
    </cofactor>
    <text evidence="1">Binds 1 zinc ion per subunit.</text>
</comment>
<comment type="similarity">
    <text evidence="1">Belongs to the metallo-dependent hydrolases superfamily. Adenosine and AMP deaminases family. Adenosine deaminase subfamily.</text>
</comment>
<accession>Q97EV1</accession>
<organism>
    <name type="scientific">Clostridium acetobutylicum (strain ATCC 824 / DSM 792 / JCM 1419 / IAM 19013 / LMG 5710 / NBRC 13948 / NRRL B-527 / VKM B-1787 / 2291 / W)</name>
    <dbReference type="NCBI Taxonomy" id="272562"/>
    <lineage>
        <taxon>Bacteria</taxon>
        <taxon>Bacillati</taxon>
        <taxon>Bacillota</taxon>
        <taxon>Clostridia</taxon>
        <taxon>Eubacteriales</taxon>
        <taxon>Clostridiaceae</taxon>
        <taxon>Clostridium</taxon>
    </lineage>
</organism>
<evidence type="ECO:0000255" key="1">
    <source>
        <dbReference type="HAMAP-Rule" id="MF_00540"/>
    </source>
</evidence>